<gene>
    <name evidence="1" type="primary">rsmG</name>
    <name type="ordered locus">Shew185_4375</name>
</gene>
<comment type="function">
    <text evidence="1">Specifically methylates the N7 position of guanine in position 527 of 16S rRNA.</text>
</comment>
<comment type="catalytic activity">
    <reaction evidence="1">
        <text>guanosine(527) in 16S rRNA + S-adenosyl-L-methionine = N(7)-methylguanosine(527) in 16S rRNA + S-adenosyl-L-homocysteine</text>
        <dbReference type="Rhea" id="RHEA:42732"/>
        <dbReference type="Rhea" id="RHEA-COMP:10209"/>
        <dbReference type="Rhea" id="RHEA-COMP:10210"/>
        <dbReference type="ChEBI" id="CHEBI:57856"/>
        <dbReference type="ChEBI" id="CHEBI:59789"/>
        <dbReference type="ChEBI" id="CHEBI:74269"/>
        <dbReference type="ChEBI" id="CHEBI:74480"/>
        <dbReference type="EC" id="2.1.1.170"/>
    </reaction>
</comment>
<comment type="subcellular location">
    <subcellularLocation>
        <location evidence="1">Cytoplasm</location>
    </subcellularLocation>
</comment>
<comment type="similarity">
    <text evidence="1">Belongs to the methyltransferase superfamily. RNA methyltransferase RsmG family.</text>
</comment>
<protein>
    <recommendedName>
        <fullName evidence="1">Ribosomal RNA small subunit methyltransferase G</fullName>
        <ecNumber evidence="1">2.1.1.170</ecNumber>
    </recommendedName>
    <alternativeName>
        <fullName evidence="1">16S rRNA 7-methylguanosine methyltransferase</fullName>
        <shortName evidence="1">16S rRNA m7G methyltransferase</shortName>
    </alternativeName>
</protein>
<evidence type="ECO:0000255" key="1">
    <source>
        <dbReference type="HAMAP-Rule" id="MF_00074"/>
    </source>
</evidence>
<keyword id="KW-0963">Cytoplasm</keyword>
<keyword id="KW-0489">Methyltransferase</keyword>
<keyword id="KW-0698">rRNA processing</keyword>
<keyword id="KW-0949">S-adenosyl-L-methionine</keyword>
<keyword id="KW-0808">Transferase</keyword>
<sequence>MLSAQLEAYLAEINLPATAEQKKQLIDFVGMLNKWNKAYNLTSVRDPEAMLIRHIMDSLVVSKHLQGERFIDVGTGPGLPGIPLAIMNPDKQFVLLDSLGKRIRFQKQVSFELGIHNISSVESRVEAYQPEQKFDGVLSRAFASIQDMLTWCHHLPAEHGQFYALKGQLNDEEMQHIPSGFAVKEVIELKVPKLDEQRHLLKIIKE</sequence>
<proteinExistence type="inferred from homology"/>
<reference key="1">
    <citation type="submission" date="2007-07" db="EMBL/GenBank/DDBJ databases">
        <title>Complete sequence of chromosome of Shewanella baltica OS185.</title>
        <authorList>
            <consortium name="US DOE Joint Genome Institute"/>
            <person name="Copeland A."/>
            <person name="Lucas S."/>
            <person name="Lapidus A."/>
            <person name="Barry K."/>
            <person name="Glavina del Rio T."/>
            <person name="Dalin E."/>
            <person name="Tice H."/>
            <person name="Pitluck S."/>
            <person name="Sims D."/>
            <person name="Brettin T."/>
            <person name="Bruce D."/>
            <person name="Detter J.C."/>
            <person name="Han C."/>
            <person name="Schmutz J."/>
            <person name="Larimer F."/>
            <person name="Land M."/>
            <person name="Hauser L."/>
            <person name="Kyrpides N."/>
            <person name="Mikhailova N."/>
            <person name="Brettar I."/>
            <person name="Rodrigues J."/>
            <person name="Konstantinidis K."/>
            <person name="Tiedje J."/>
            <person name="Richardson P."/>
        </authorList>
    </citation>
    <scope>NUCLEOTIDE SEQUENCE [LARGE SCALE GENOMIC DNA]</scope>
    <source>
        <strain>OS185</strain>
    </source>
</reference>
<feature type="chain" id="PRO_1000010200" description="Ribosomal RNA small subunit methyltransferase G">
    <location>
        <begin position="1"/>
        <end position="206"/>
    </location>
</feature>
<feature type="binding site" evidence="1">
    <location>
        <position position="74"/>
    </location>
    <ligand>
        <name>S-adenosyl-L-methionine</name>
        <dbReference type="ChEBI" id="CHEBI:59789"/>
    </ligand>
</feature>
<feature type="binding site" evidence="1">
    <location>
        <position position="79"/>
    </location>
    <ligand>
        <name>S-adenosyl-L-methionine</name>
        <dbReference type="ChEBI" id="CHEBI:59789"/>
    </ligand>
</feature>
<feature type="binding site" evidence="1">
    <location>
        <begin position="125"/>
        <end position="126"/>
    </location>
    <ligand>
        <name>S-adenosyl-L-methionine</name>
        <dbReference type="ChEBI" id="CHEBI:59789"/>
    </ligand>
</feature>
<feature type="binding site" evidence="1">
    <location>
        <position position="140"/>
    </location>
    <ligand>
        <name>S-adenosyl-L-methionine</name>
        <dbReference type="ChEBI" id="CHEBI:59789"/>
    </ligand>
</feature>
<organism>
    <name type="scientific">Shewanella baltica (strain OS185)</name>
    <dbReference type="NCBI Taxonomy" id="402882"/>
    <lineage>
        <taxon>Bacteria</taxon>
        <taxon>Pseudomonadati</taxon>
        <taxon>Pseudomonadota</taxon>
        <taxon>Gammaproteobacteria</taxon>
        <taxon>Alteromonadales</taxon>
        <taxon>Shewanellaceae</taxon>
        <taxon>Shewanella</taxon>
    </lineage>
</organism>
<name>RSMG_SHEB8</name>
<accession>A6WUK0</accession>
<dbReference type="EC" id="2.1.1.170" evidence="1"/>
<dbReference type="EMBL" id="CP000753">
    <property type="protein sequence ID" value="ABS10489.1"/>
    <property type="molecule type" value="Genomic_DNA"/>
</dbReference>
<dbReference type="RefSeq" id="WP_006083835.1">
    <property type="nucleotide sequence ID" value="NC_009665.1"/>
</dbReference>
<dbReference type="SMR" id="A6WUK0"/>
<dbReference type="GeneID" id="11774470"/>
<dbReference type="KEGG" id="sbm:Shew185_4375"/>
<dbReference type="HOGENOM" id="CLU_065341_2_0_6"/>
<dbReference type="GO" id="GO:0005829">
    <property type="term" value="C:cytosol"/>
    <property type="evidence" value="ECO:0007669"/>
    <property type="project" value="TreeGrafter"/>
</dbReference>
<dbReference type="GO" id="GO:0070043">
    <property type="term" value="F:rRNA (guanine-N7-)-methyltransferase activity"/>
    <property type="evidence" value="ECO:0007669"/>
    <property type="project" value="UniProtKB-UniRule"/>
</dbReference>
<dbReference type="CDD" id="cd02440">
    <property type="entry name" value="AdoMet_MTases"/>
    <property type="match status" value="1"/>
</dbReference>
<dbReference type="FunFam" id="3.40.50.150:FF:000032">
    <property type="entry name" value="Ribosomal RNA small subunit methyltransferase G"/>
    <property type="match status" value="1"/>
</dbReference>
<dbReference type="Gene3D" id="3.40.50.150">
    <property type="entry name" value="Vaccinia Virus protein VP39"/>
    <property type="match status" value="1"/>
</dbReference>
<dbReference type="HAMAP" id="MF_00074">
    <property type="entry name" value="16SrRNA_methyltr_G"/>
    <property type="match status" value="1"/>
</dbReference>
<dbReference type="InterPro" id="IPR003682">
    <property type="entry name" value="rRNA_ssu_MeTfrase_G"/>
</dbReference>
<dbReference type="InterPro" id="IPR029063">
    <property type="entry name" value="SAM-dependent_MTases_sf"/>
</dbReference>
<dbReference type="NCBIfam" id="TIGR00138">
    <property type="entry name" value="rsmG_gidB"/>
    <property type="match status" value="1"/>
</dbReference>
<dbReference type="PANTHER" id="PTHR31760">
    <property type="entry name" value="S-ADENOSYL-L-METHIONINE-DEPENDENT METHYLTRANSFERASES SUPERFAMILY PROTEIN"/>
    <property type="match status" value="1"/>
</dbReference>
<dbReference type="PANTHER" id="PTHR31760:SF0">
    <property type="entry name" value="S-ADENOSYL-L-METHIONINE-DEPENDENT METHYLTRANSFERASES SUPERFAMILY PROTEIN"/>
    <property type="match status" value="1"/>
</dbReference>
<dbReference type="Pfam" id="PF02527">
    <property type="entry name" value="GidB"/>
    <property type="match status" value="1"/>
</dbReference>
<dbReference type="PIRSF" id="PIRSF003078">
    <property type="entry name" value="GidB"/>
    <property type="match status" value="1"/>
</dbReference>
<dbReference type="SUPFAM" id="SSF53335">
    <property type="entry name" value="S-adenosyl-L-methionine-dependent methyltransferases"/>
    <property type="match status" value="1"/>
</dbReference>